<proteinExistence type="inferred from homology"/>
<gene>
    <name evidence="1" type="primary">moaA</name>
    <name type="ordered locus">Rpal_2191</name>
</gene>
<dbReference type="EC" id="4.1.99.22" evidence="1"/>
<dbReference type="EMBL" id="CP001096">
    <property type="protein sequence ID" value="ACF00712.1"/>
    <property type="molecule type" value="Genomic_DNA"/>
</dbReference>
<dbReference type="RefSeq" id="WP_012495510.1">
    <property type="nucleotide sequence ID" value="NC_011004.1"/>
</dbReference>
<dbReference type="SMR" id="B3QCQ7"/>
<dbReference type="KEGG" id="rpt:Rpal_2191"/>
<dbReference type="HOGENOM" id="CLU_009273_0_1_5"/>
<dbReference type="OrthoDB" id="9763993at2"/>
<dbReference type="UniPathway" id="UPA00344"/>
<dbReference type="Proteomes" id="UP000001725">
    <property type="component" value="Chromosome"/>
</dbReference>
<dbReference type="GO" id="GO:0051539">
    <property type="term" value="F:4 iron, 4 sulfur cluster binding"/>
    <property type="evidence" value="ECO:0007669"/>
    <property type="project" value="UniProtKB-UniRule"/>
</dbReference>
<dbReference type="GO" id="GO:0061799">
    <property type="term" value="F:cyclic pyranopterin monophosphate synthase activity"/>
    <property type="evidence" value="ECO:0007669"/>
    <property type="project" value="TreeGrafter"/>
</dbReference>
<dbReference type="GO" id="GO:0061798">
    <property type="term" value="F:GTP 3',8'-cyclase activity"/>
    <property type="evidence" value="ECO:0007669"/>
    <property type="project" value="UniProtKB-UniRule"/>
</dbReference>
<dbReference type="GO" id="GO:0005525">
    <property type="term" value="F:GTP binding"/>
    <property type="evidence" value="ECO:0007669"/>
    <property type="project" value="UniProtKB-UniRule"/>
</dbReference>
<dbReference type="GO" id="GO:0046872">
    <property type="term" value="F:metal ion binding"/>
    <property type="evidence" value="ECO:0007669"/>
    <property type="project" value="UniProtKB-KW"/>
</dbReference>
<dbReference type="GO" id="GO:1904047">
    <property type="term" value="F:S-adenosyl-L-methionine binding"/>
    <property type="evidence" value="ECO:0007669"/>
    <property type="project" value="UniProtKB-UniRule"/>
</dbReference>
<dbReference type="GO" id="GO:0006777">
    <property type="term" value="P:Mo-molybdopterin cofactor biosynthetic process"/>
    <property type="evidence" value="ECO:0007669"/>
    <property type="project" value="UniProtKB-UniRule"/>
</dbReference>
<dbReference type="CDD" id="cd01335">
    <property type="entry name" value="Radical_SAM"/>
    <property type="match status" value="1"/>
</dbReference>
<dbReference type="CDD" id="cd21117">
    <property type="entry name" value="Twitch_MoaA"/>
    <property type="match status" value="1"/>
</dbReference>
<dbReference type="Gene3D" id="3.20.20.70">
    <property type="entry name" value="Aldolase class I"/>
    <property type="match status" value="1"/>
</dbReference>
<dbReference type="HAMAP" id="MF_01225_B">
    <property type="entry name" value="MoaA_B"/>
    <property type="match status" value="1"/>
</dbReference>
<dbReference type="InterPro" id="IPR013785">
    <property type="entry name" value="Aldolase_TIM"/>
</dbReference>
<dbReference type="InterPro" id="IPR006638">
    <property type="entry name" value="Elp3/MiaA/NifB-like_rSAM"/>
</dbReference>
<dbReference type="InterPro" id="IPR013483">
    <property type="entry name" value="MoaA"/>
</dbReference>
<dbReference type="InterPro" id="IPR000385">
    <property type="entry name" value="MoaA_NifB_PqqE_Fe-S-bd_CS"/>
</dbReference>
<dbReference type="InterPro" id="IPR010505">
    <property type="entry name" value="MoaA_twitch"/>
</dbReference>
<dbReference type="InterPro" id="IPR050105">
    <property type="entry name" value="MoCo_biosynth_MoaA/MoaC"/>
</dbReference>
<dbReference type="InterPro" id="IPR007197">
    <property type="entry name" value="rSAM"/>
</dbReference>
<dbReference type="NCBIfam" id="TIGR02666">
    <property type="entry name" value="moaA"/>
    <property type="match status" value="1"/>
</dbReference>
<dbReference type="PANTHER" id="PTHR22960:SF0">
    <property type="entry name" value="MOLYBDENUM COFACTOR BIOSYNTHESIS PROTEIN 1"/>
    <property type="match status" value="1"/>
</dbReference>
<dbReference type="PANTHER" id="PTHR22960">
    <property type="entry name" value="MOLYBDOPTERIN COFACTOR SYNTHESIS PROTEIN A"/>
    <property type="match status" value="1"/>
</dbReference>
<dbReference type="Pfam" id="PF13353">
    <property type="entry name" value="Fer4_12"/>
    <property type="match status" value="1"/>
</dbReference>
<dbReference type="Pfam" id="PF06463">
    <property type="entry name" value="Mob_synth_C"/>
    <property type="match status" value="1"/>
</dbReference>
<dbReference type="Pfam" id="PF04055">
    <property type="entry name" value="Radical_SAM"/>
    <property type="match status" value="1"/>
</dbReference>
<dbReference type="SFLD" id="SFLDG01383">
    <property type="entry name" value="cyclic_pyranopterin_phosphate"/>
    <property type="match status" value="1"/>
</dbReference>
<dbReference type="SFLD" id="SFLDG01072">
    <property type="entry name" value="dehydrogenase_like"/>
    <property type="match status" value="1"/>
</dbReference>
<dbReference type="SMART" id="SM00729">
    <property type="entry name" value="Elp3"/>
    <property type="match status" value="1"/>
</dbReference>
<dbReference type="SUPFAM" id="SSF102114">
    <property type="entry name" value="Radical SAM enzymes"/>
    <property type="match status" value="1"/>
</dbReference>
<dbReference type="PROSITE" id="PS01305">
    <property type="entry name" value="MOAA_NIFB_PQQE"/>
    <property type="match status" value="1"/>
</dbReference>
<dbReference type="PROSITE" id="PS51918">
    <property type="entry name" value="RADICAL_SAM"/>
    <property type="match status" value="1"/>
</dbReference>
<organism>
    <name type="scientific">Rhodopseudomonas palustris (strain TIE-1)</name>
    <dbReference type="NCBI Taxonomy" id="395960"/>
    <lineage>
        <taxon>Bacteria</taxon>
        <taxon>Pseudomonadati</taxon>
        <taxon>Pseudomonadota</taxon>
        <taxon>Alphaproteobacteria</taxon>
        <taxon>Hyphomicrobiales</taxon>
        <taxon>Nitrobacteraceae</taxon>
        <taxon>Rhodopseudomonas</taxon>
    </lineage>
</organism>
<reference key="1">
    <citation type="submission" date="2008-05" db="EMBL/GenBank/DDBJ databases">
        <title>Complete sequence of Rhodopseudomonas palustris TIE-1.</title>
        <authorList>
            <consortium name="US DOE Joint Genome Institute"/>
            <person name="Lucas S."/>
            <person name="Copeland A."/>
            <person name="Lapidus A."/>
            <person name="Glavina del Rio T."/>
            <person name="Dalin E."/>
            <person name="Tice H."/>
            <person name="Pitluck S."/>
            <person name="Chain P."/>
            <person name="Malfatti S."/>
            <person name="Shin M."/>
            <person name="Vergez L."/>
            <person name="Lang D."/>
            <person name="Schmutz J."/>
            <person name="Larimer F."/>
            <person name="Land M."/>
            <person name="Hauser L."/>
            <person name="Kyrpides N."/>
            <person name="Mikhailova N."/>
            <person name="Emerson D."/>
            <person name="Newman D.K."/>
            <person name="Roden E."/>
            <person name="Richardson P."/>
        </authorList>
    </citation>
    <scope>NUCLEOTIDE SEQUENCE [LARGE SCALE GENOMIC DNA]</scope>
    <source>
        <strain>TIE-1</strain>
    </source>
</reference>
<comment type="function">
    <text evidence="1">Catalyzes the cyclization of GTP to (8S)-3',8-cyclo-7,8-dihydroguanosine 5'-triphosphate.</text>
</comment>
<comment type="catalytic activity">
    <reaction evidence="1">
        <text>GTP + AH2 + S-adenosyl-L-methionine = (8S)-3',8-cyclo-7,8-dihydroguanosine 5'-triphosphate + 5'-deoxyadenosine + L-methionine + A + H(+)</text>
        <dbReference type="Rhea" id="RHEA:49576"/>
        <dbReference type="ChEBI" id="CHEBI:13193"/>
        <dbReference type="ChEBI" id="CHEBI:15378"/>
        <dbReference type="ChEBI" id="CHEBI:17319"/>
        <dbReference type="ChEBI" id="CHEBI:17499"/>
        <dbReference type="ChEBI" id="CHEBI:37565"/>
        <dbReference type="ChEBI" id="CHEBI:57844"/>
        <dbReference type="ChEBI" id="CHEBI:59789"/>
        <dbReference type="ChEBI" id="CHEBI:131766"/>
        <dbReference type="EC" id="4.1.99.22"/>
    </reaction>
</comment>
<comment type="cofactor">
    <cofactor evidence="1">
        <name>[4Fe-4S] cluster</name>
        <dbReference type="ChEBI" id="CHEBI:49883"/>
    </cofactor>
    <text evidence="1">Binds 2 [4Fe-4S] clusters. Binds 1 [4Fe-4S] cluster coordinated with 3 cysteines and an exchangeable S-adenosyl-L-methionine and 1 [4Fe-4S] cluster coordinated with 3 cysteines and the GTP-derived substrate.</text>
</comment>
<comment type="pathway">
    <text evidence="1">Cofactor biosynthesis; molybdopterin biosynthesis.</text>
</comment>
<comment type="subunit">
    <text evidence="1">Monomer and homodimer.</text>
</comment>
<comment type="similarity">
    <text evidence="1">Belongs to the radical SAM superfamily. MoaA family.</text>
</comment>
<evidence type="ECO:0000255" key="1">
    <source>
        <dbReference type="HAMAP-Rule" id="MF_01225"/>
    </source>
</evidence>
<evidence type="ECO:0000255" key="2">
    <source>
        <dbReference type="PROSITE-ProRule" id="PRU01266"/>
    </source>
</evidence>
<feature type="chain" id="PRO_1000139338" description="GTP 3',8-cyclase">
    <location>
        <begin position="1"/>
        <end position="344"/>
    </location>
</feature>
<feature type="domain" description="Radical SAM core" evidence="2">
    <location>
        <begin position="19"/>
        <end position="239"/>
    </location>
</feature>
<feature type="binding site" evidence="1">
    <location>
        <position position="28"/>
    </location>
    <ligand>
        <name>GTP</name>
        <dbReference type="ChEBI" id="CHEBI:37565"/>
    </ligand>
</feature>
<feature type="binding site" evidence="1">
    <location>
        <position position="35"/>
    </location>
    <ligand>
        <name>[4Fe-4S] cluster</name>
        <dbReference type="ChEBI" id="CHEBI:49883"/>
        <label>1</label>
        <note>4Fe-4S-S-AdoMet</note>
    </ligand>
</feature>
<feature type="binding site" evidence="1">
    <location>
        <position position="39"/>
    </location>
    <ligand>
        <name>[4Fe-4S] cluster</name>
        <dbReference type="ChEBI" id="CHEBI:49883"/>
        <label>1</label>
        <note>4Fe-4S-S-AdoMet</note>
    </ligand>
</feature>
<feature type="binding site" evidence="1">
    <location>
        <position position="41"/>
    </location>
    <ligand>
        <name>S-adenosyl-L-methionine</name>
        <dbReference type="ChEBI" id="CHEBI:59789"/>
    </ligand>
</feature>
<feature type="binding site" evidence="1">
    <location>
        <position position="42"/>
    </location>
    <ligand>
        <name>[4Fe-4S] cluster</name>
        <dbReference type="ChEBI" id="CHEBI:49883"/>
        <label>1</label>
        <note>4Fe-4S-S-AdoMet</note>
    </ligand>
</feature>
<feature type="binding site" evidence="1">
    <location>
        <position position="77"/>
    </location>
    <ligand>
        <name>GTP</name>
        <dbReference type="ChEBI" id="CHEBI:37565"/>
    </ligand>
</feature>
<feature type="binding site" evidence="1">
    <location>
        <position position="81"/>
    </location>
    <ligand>
        <name>S-adenosyl-L-methionine</name>
        <dbReference type="ChEBI" id="CHEBI:59789"/>
    </ligand>
</feature>
<feature type="binding site" evidence="1">
    <location>
        <position position="111"/>
    </location>
    <ligand>
        <name>GTP</name>
        <dbReference type="ChEBI" id="CHEBI:37565"/>
    </ligand>
</feature>
<feature type="binding site" evidence="1">
    <location>
        <position position="135"/>
    </location>
    <ligand>
        <name>S-adenosyl-L-methionine</name>
        <dbReference type="ChEBI" id="CHEBI:59789"/>
    </ligand>
</feature>
<feature type="binding site" evidence="1">
    <location>
        <position position="171"/>
    </location>
    <ligand>
        <name>GTP</name>
        <dbReference type="ChEBI" id="CHEBI:37565"/>
    </ligand>
</feature>
<feature type="binding site" evidence="1">
    <location>
        <position position="205"/>
    </location>
    <ligand>
        <name>S-adenosyl-L-methionine</name>
        <dbReference type="ChEBI" id="CHEBI:59789"/>
    </ligand>
</feature>
<feature type="binding site" evidence="1">
    <location>
        <position position="268"/>
    </location>
    <ligand>
        <name>[4Fe-4S] cluster</name>
        <dbReference type="ChEBI" id="CHEBI:49883"/>
        <label>2</label>
        <note>4Fe-4S-substrate</note>
    </ligand>
</feature>
<feature type="binding site" evidence="1">
    <location>
        <position position="271"/>
    </location>
    <ligand>
        <name>[4Fe-4S] cluster</name>
        <dbReference type="ChEBI" id="CHEBI:49883"/>
        <label>2</label>
        <note>4Fe-4S-substrate</note>
    </ligand>
</feature>
<feature type="binding site" evidence="1">
    <location>
        <begin position="273"/>
        <end position="275"/>
    </location>
    <ligand>
        <name>GTP</name>
        <dbReference type="ChEBI" id="CHEBI:37565"/>
    </ligand>
</feature>
<feature type="binding site" evidence="1">
    <location>
        <position position="285"/>
    </location>
    <ligand>
        <name>[4Fe-4S] cluster</name>
        <dbReference type="ChEBI" id="CHEBI:49883"/>
        <label>2</label>
        <note>4Fe-4S-substrate</note>
    </ligand>
</feature>
<name>MOAA_RHOPT</name>
<protein>
    <recommendedName>
        <fullName evidence="1">GTP 3',8-cyclase</fullName>
        <ecNumber evidence="1">4.1.99.22</ecNumber>
    </recommendedName>
    <alternativeName>
        <fullName evidence="1">Molybdenum cofactor biosynthesis protein A</fullName>
    </alternativeName>
</protein>
<keyword id="KW-0004">4Fe-4S</keyword>
<keyword id="KW-0342">GTP-binding</keyword>
<keyword id="KW-0408">Iron</keyword>
<keyword id="KW-0411">Iron-sulfur</keyword>
<keyword id="KW-0456">Lyase</keyword>
<keyword id="KW-0479">Metal-binding</keyword>
<keyword id="KW-0501">Molybdenum cofactor biosynthesis</keyword>
<keyword id="KW-0547">Nucleotide-binding</keyword>
<keyword id="KW-0949">S-adenosyl-L-methionine</keyword>
<sequence>MTSAAITPPTTVDRPMTDPFGRTIDYLRVSITDRCDFRCVYCMAEDMTFLPRADLLTLEELDRLCSAFIAKGVRKLRLTGGEPLVRRNMMSLVRSLSRHLKTGALDELTLTTNGSQLARFAAELADCGVRRVNVSLDTLDPDEFRRITRWGDLDRVLAGINAARAAGLAVKINSVVLKGSNEDEIPSLMRWAHGLGMGLTLIEVMPLGEIGEGRIDQYVPLSLIRARLSANYTLTDLPDSTGGPARYVRVEETGGRLGFITPLTHNFCESCNRVRITCTGTIHTCLGHEDASDLRRPLRASADDALLSAAIDQAIGSKPKGHDFIIDRRHNRPSVSRHMSVTGG</sequence>
<accession>B3QCQ7</accession>